<dbReference type="EC" id="3.1.11.6" evidence="1"/>
<dbReference type="EMBL" id="AL596168">
    <property type="protein sequence ID" value="CAC96629.1"/>
    <property type="molecule type" value="Genomic_DNA"/>
</dbReference>
<dbReference type="PIR" id="AE1607">
    <property type="entry name" value="AE1607"/>
</dbReference>
<dbReference type="RefSeq" id="WP_010991514.1">
    <property type="nucleotide sequence ID" value="NC_003212.1"/>
</dbReference>
<dbReference type="SMR" id="Q92BZ3"/>
<dbReference type="STRING" id="272626.gene:17565729"/>
<dbReference type="GeneID" id="93234778"/>
<dbReference type="KEGG" id="lin:lin1398"/>
<dbReference type="eggNOG" id="COG1570">
    <property type="taxonomic scope" value="Bacteria"/>
</dbReference>
<dbReference type="HOGENOM" id="CLU_023625_2_0_9"/>
<dbReference type="OrthoDB" id="9802795at2"/>
<dbReference type="Proteomes" id="UP000002513">
    <property type="component" value="Chromosome"/>
</dbReference>
<dbReference type="GO" id="GO:0005737">
    <property type="term" value="C:cytoplasm"/>
    <property type="evidence" value="ECO:0007669"/>
    <property type="project" value="UniProtKB-SubCell"/>
</dbReference>
<dbReference type="GO" id="GO:0009318">
    <property type="term" value="C:exodeoxyribonuclease VII complex"/>
    <property type="evidence" value="ECO:0007669"/>
    <property type="project" value="InterPro"/>
</dbReference>
<dbReference type="GO" id="GO:0008855">
    <property type="term" value="F:exodeoxyribonuclease VII activity"/>
    <property type="evidence" value="ECO:0007669"/>
    <property type="project" value="UniProtKB-UniRule"/>
</dbReference>
<dbReference type="GO" id="GO:0003676">
    <property type="term" value="F:nucleic acid binding"/>
    <property type="evidence" value="ECO:0007669"/>
    <property type="project" value="InterPro"/>
</dbReference>
<dbReference type="GO" id="GO:0006308">
    <property type="term" value="P:DNA catabolic process"/>
    <property type="evidence" value="ECO:0007669"/>
    <property type="project" value="UniProtKB-UniRule"/>
</dbReference>
<dbReference type="CDD" id="cd04489">
    <property type="entry name" value="ExoVII_LU_OBF"/>
    <property type="match status" value="1"/>
</dbReference>
<dbReference type="HAMAP" id="MF_00378">
    <property type="entry name" value="Exonuc_7_L"/>
    <property type="match status" value="1"/>
</dbReference>
<dbReference type="InterPro" id="IPR003753">
    <property type="entry name" value="Exonuc_VII_L"/>
</dbReference>
<dbReference type="InterPro" id="IPR020579">
    <property type="entry name" value="Exonuc_VII_lsu_C"/>
</dbReference>
<dbReference type="InterPro" id="IPR025824">
    <property type="entry name" value="OB-fold_nuc-bd_dom"/>
</dbReference>
<dbReference type="NCBIfam" id="TIGR00237">
    <property type="entry name" value="xseA"/>
    <property type="match status" value="1"/>
</dbReference>
<dbReference type="PANTHER" id="PTHR30008">
    <property type="entry name" value="EXODEOXYRIBONUCLEASE 7 LARGE SUBUNIT"/>
    <property type="match status" value="1"/>
</dbReference>
<dbReference type="PANTHER" id="PTHR30008:SF0">
    <property type="entry name" value="EXODEOXYRIBONUCLEASE 7 LARGE SUBUNIT"/>
    <property type="match status" value="1"/>
</dbReference>
<dbReference type="Pfam" id="PF02601">
    <property type="entry name" value="Exonuc_VII_L"/>
    <property type="match status" value="1"/>
</dbReference>
<dbReference type="Pfam" id="PF13742">
    <property type="entry name" value="tRNA_anti_2"/>
    <property type="match status" value="1"/>
</dbReference>
<comment type="function">
    <text evidence="1">Bidirectionally degrades single-stranded DNA into large acid-insoluble oligonucleotides, which are then degraded further into small acid-soluble oligonucleotides.</text>
</comment>
<comment type="catalytic activity">
    <reaction evidence="1">
        <text>Exonucleolytic cleavage in either 5'- to 3'- or 3'- to 5'-direction to yield nucleoside 5'-phosphates.</text>
        <dbReference type="EC" id="3.1.11.6"/>
    </reaction>
</comment>
<comment type="subunit">
    <text evidence="1">Heterooligomer composed of large and small subunits.</text>
</comment>
<comment type="subcellular location">
    <subcellularLocation>
        <location evidence="1">Cytoplasm</location>
    </subcellularLocation>
</comment>
<comment type="similarity">
    <text evidence="1">Belongs to the XseA family.</text>
</comment>
<organism>
    <name type="scientific">Listeria innocua serovar 6a (strain ATCC BAA-680 / CLIP 11262)</name>
    <dbReference type="NCBI Taxonomy" id="272626"/>
    <lineage>
        <taxon>Bacteria</taxon>
        <taxon>Bacillati</taxon>
        <taxon>Bacillota</taxon>
        <taxon>Bacilli</taxon>
        <taxon>Bacillales</taxon>
        <taxon>Listeriaceae</taxon>
        <taxon>Listeria</taxon>
    </lineage>
</organism>
<feature type="chain" id="PRO_0000197856" description="Exodeoxyribonuclease 7 large subunit">
    <location>
        <begin position="1"/>
        <end position="450"/>
    </location>
</feature>
<gene>
    <name evidence="1" type="primary">xseA</name>
    <name type="ordered locus">lin1398</name>
</gene>
<reference key="1">
    <citation type="journal article" date="2001" name="Science">
        <title>Comparative genomics of Listeria species.</title>
        <authorList>
            <person name="Glaser P."/>
            <person name="Frangeul L."/>
            <person name="Buchrieser C."/>
            <person name="Rusniok C."/>
            <person name="Amend A."/>
            <person name="Baquero F."/>
            <person name="Berche P."/>
            <person name="Bloecker H."/>
            <person name="Brandt P."/>
            <person name="Chakraborty T."/>
            <person name="Charbit A."/>
            <person name="Chetouani F."/>
            <person name="Couve E."/>
            <person name="de Daruvar A."/>
            <person name="Dehoux P."/>
            <person name="Domann E."/>
            <person name="Dominguez-Bernal G."/>
            <person name="Duchaud E."/>
            <person name="Durant L."/>
            <person name="Dussurget O."/>
            <person name="Entian K.-D."/>
            <person name="Fsihi H."/>
            <person name="Garcia-del Portillo F."/>
            <person name="Garrido P."/>
            <person name="Gautier L."/>
            <person name="Goebel W."/>
            <person name="Gomez-Lopez N."/>
            <person name="Hain T."/>
            <person name="Hauf J."/>
            <person name="Jackson D."/>
            <person name="Jones L.-M."/>
            <person name="Kaerst U."/>
            <person name="Kreft J."/>
            <person name="Kuhn M."/>
            <person name="Kunst F."/>
            <person name="Kurapkat G."/>
            <person name="Madueno E."/>
            <person name="Maitournam A."/>
            <person name="Mata Vicente J."/>
            <person name="Ng E."/>
            <person name="Nedjari H."/>
            <person name="Nordsiek G."/>
            <person name="Novella S."/>
            <person name="de Pablos B."/>
            <person name="Perez-Diaz J.-C."/>
            <person name="Purcell R."/>
            <person name="Remmel B."/>
            <person name="Rose M."/>
            <person name="Schlueter T."/>
            <person name="Simoes N."/>
            <person name="Tierrez A."/>
            <person name="Vazquez-Boland J.-A."/>
            <person name="Voss H."/>
            <person name="Wehland J."/>
            <person name="Cossart P."/>
        </authorList>
    </citation>
    <scope>NUCLEOTIDE SEQUENCE [LARGE SCALE GENOMIC DNA]</scope>
    <source>
        <strain>ATCC BAA-680 / CLIP 11262</strain>
    </source>
</reference>
<proteinExistence type="inferred from homology"/>
<sequence length="450" mass="51119">MEQDKYLTVAAITKYIEKKFEVDPYMKQVFVRGEISNLKQPASGHLYFTVKDEFAMLRSVMFQKAVQKIGFVPEDGMNVLITGRIGVFTKAGRYQFYAEHMEPDGVGALYIQLEQLKSQLEKEGLFAEAHKKVLPSFPSKVAVVTSKTGAAVRDILTTIHRRMPSVEVIVYPTVVQGDKAAQRIVENIGRINQRNDIDVMIIGRGGGSLEELWAFNEEPVVRAVYDSDVPVISAVGHETDFALSDFSADVRAATPTAAAELAVPDYRDLEERLAERKYRLLAVTRQLLERKERALEQLKQHLILNGPKHQLEQQMERTDYFAERLKNAFSKQVLLKQTTFNRLNDRLHYYHPKKEIALQKEQIILRKQALDKAMKQQLKDKQQAFIRQVEALEHLSPLALLKRGFGVTYKAGELVKTVQELEIGDNIQVKMQGGHIDAHITAKEEDTSGN</sequence>
<name>EX7L_LISIN</name>
<accession>Q92BZ3</accession>
<protein>
    <recommendedName>
        <fullName evidence="1">Exodeoxyribonuclease 7 large subunit</fullName>
        <ecNumber evidence="1">3.1.11.6</ecNumber>
    </recommendedName>
    <alternativeName>
        <fullName evidence="1">Exodeoxyribonuclease VII large subunit</fullName>
        <shortName evidence="1">Exonuclease VII large subunit</shortName>
    </alternativeName>
</protein>
<evidence type="ECO:0000255" key="1">
    <source>
        <dbReference type="HAMAP-Rule" id="MF_00378"/>
    </source>
</evidence>
<keyword id="KW-0963">Cytoplasm</keyword>
<keyword id="KW-0269">Exonuclease</keyword>
<keyword id="KW-0378">Hydrolase</keyword>
<keyword id="KW-0540">Nuclease</keyword>